<feature type="chain" id="PRO_0000125836" description="Large ribosomal subunit protein uL1">
    <location>
        <begin position="1"/>
        <end position="217"/>
    </location>
</feature>
<gene>
    <name type="primary">RPL10A</name>
    <name type="ordered locus">AFL116W</name>
</gene>
<sequence length="217" mass="24467">MSKITTTHVRDNVKELLKYSNETKKRNFLETVELQVGLKNYDPQRDKRFSGTLKLPVCPRPNMSVCIFGDAFDVDRAKSCGVDAMSVDDLKKLNKNKKLIKKLAKKYNAFIASEVLIKQVPRLLGPQLSKAGKFPTPVSHNDDLYSKVTDVRSTIKFQLKKVLCLAVAVGNVEMDEDTLVNQILMSVNFLVSLLKKNWQNVGSLVIKSTMGPAFRLY</sequence>
<name>RL10A_EREGS</name>
<organism>
    <name type="scientific">Eremothecium gossypii (strain ATCC 10895 / CBS 109.51 / FGSC 9923 / NRRL Y-1056)</name>
    <name type="common">Yeast</name>
    <name type="synonym">Ashbya gossypii</name>
    <dbReference type="NCBI Taxonomy" id="284811"/>
    <lineage>
        <taxon>Eukaryota</taxon>
        <taxon>Fungi</taxon>
        <taxon>Dikarya</taxon>
        <taxon>Ascomycota</taxon>
        <taxon>Saccharomycotina</taxon>
        <taxon>Saccharomycetes</taxon>
        <taxon>Saccharomycetales</taxon>
        <taxon>Saccharomycetaceae</taxon>
        <taxon>Eremothecium</taxon>
    </lineage>
</organism>
<dbReference type="EMBL" id="AE016819">
    <property type="protein sequence ID" value="AAS53258.1"/>
    <property type="molecule type" value="Genomic_DNA"/>
</dbReference>
<dbReference type="RefSeq" id="NP_985434.1">
    <property type="nucleotide sequence ID" value="NM_210788.1"/>
</dbReference>
<dbReference type="SMR" id="Q755D9"/>
<dbReference type="FunCoup" id="Q755D9">
    <property type="interactions" value="1157"/>
</dbReference>
<dbReference type="STRING" id="284811.Q755D9"/>
<dbReference type="EnsemblFungi" id="AAS53258">
    <property type="protein sequence ID" value="AAS53258"/>
    <property type="gene ID" value="AGOS_AFL116W"/>
</dbReference>
<dbReference type="GeneID" id="4621661"/>
<dbReference type="KEGG" id="ago:AGOS_AFL116W"/>
<dbReference type="eggNOG" id="KOG1570">
    <property type="taxonomic scope" value="Eukaryota"/>
</dbReference>
<dbReference type="HOGENOM" id="CLU_062853_3_0_1"/>
<dbReference type="InParanoid" id="Q755D9"/>
<dbReference type="OMA" id="GPRNKMP"/>
<dbReference type="OrthoDB" id="2449818at2759"/>
<dbReference type="Proteomes" id="UP000000591">
    <property type="component" value="Chromosome VI"/>
</dbReference>
<dbReference type="GO" id="GO:0022625">
    <property type="term" value="C:cytosolic large ribosomal subunit"/>
    <property type="evidence" value="ECO:0000318"/>
    <property type="project" value="GO_Central"/>
</dbReference>
<dbReference type="GO" id="GO:0003723">
    <property type="term" value="F:RNA binding"/>
    <property type="evidence" value="ECO:0000318"/>
    <property type="project" value="GO_Central"/>
</dbReference>
<dbReference type="GO" id="GO:0003735">
    <property type="term" value="F:structural constituent of ribosome"/>
    <property type="evidence" value="ECO:0007669"/>
    <property type="project" value="InterPro"/>
</dbReference>
<dbReference type="GO" id="GO:0042254">
    <property type="term" value="P:ribosome biogenesis"/>
    <property type="evidence" value="ECO:0007669"/>
    <property type="project" value="UniProtKB-ARBA"/>
</dbReference>
<dbReference type="GO" id="GO:0006412">
    <property type="term" value="P:translation"/>
    <property type="evidence" value="ECO:0007669"/>
    <property type="project" value="InterPro"/>
</dbReference>
<dbReference type="CDD" id="cd00403">
    <property type="entry name" value="Ribosomal_L1"/>
    <property type="match status" value="1"/>
</dbReference>
<dbReference type="FunFam" id="3.30.190.20:FF:000006">
    <property type="entry name" value="Ribosomal protein"/>
    <property type="match status" value="1"/>
</dbReference>
<dbReference type="FunFam" id="3.40.50.790:FF:000002">
    <property type="entry name" value="Ribosomal protein"/>
    <property type="match status" value="1"/>
</dbReference>
<dbReference type="FunFam" id="3.30.190.20:FF:000009">
    <property type="entry name" value="Ribosomal protein L10a"/>
    <property type="match status" value="1"/>
</dbReference>
<dbReference type="Gene3D" id="3.30.190.20">
    <property type="match status" value="1"/>
</dbReference>
<dbReference type="Gene3D" id="3.40.50.790">
    <property type="match status" value="1"/>
</dbReference>
<dbReference type="InterPro" id="IPR050257">
    <property type="entry name" value="eL8/uL1-like"/>
</dbReference>
<dbReference type="InterPro" id="IPR002143">
    <property type="entry name" value="Ribosomal_uL1"/>
</dbReference>
<dbReference type="InterPro" id="IPR023674">
    <property type="entry name" value="Ribosomal_uL1-like"/>
</dbReference>
<dbReference type="InterPro" id="IPR028364">
    <property type="entry name" value="Ribosomal_uL1/biogenesis"/>
</dbReference>
<dbReference type="InterPro" id="IPR016095">
    <property type="entry name" value="Ribosomal_uL1_3-a/b-sand"/>
</dbReference>
<dbReference type="InterPro" id="IPR023673">
    <property type="entry name" value="Ribosomal_uL1_CS"/>
</dbReference>
<dbReference type="PANTHER" id="PTHR23105">
    <property type="entry name" value="RIBOSOMAL PROTEIN L7AE FAMILY MEMBER"/>
    <property type="match status" value="1"/>
</dbReference>
<dbReference type="Pfam" id="PF00687">
    <property type="entry name" value="Ribosomal_L1"/>
    <property type="match status" value="1"/>
</dbReference>
<dbReference type="PIRSF" id="PIRSF002155">
    <property type="entry name" value="Ribosomal_L1"/>
    <property type="match status" value="1"/>
</dbReference>
<dbReference type="SUPFAM" id="SSF56808">
    <property type="entry name" value="Ribosomal protein L1"/>
    <property type="match status" value="1"/>
</dbReference>
<dbReference type="PROSITE" id="PS01199">
    <property type="entry name" value="RIBOSOMAL_L1"/>
    <property type="match status" value="1"/>
</dbReference>
<reference key="1">
    <citation type="journal article" date="2004" name="Science">
        <title>The Ashbya gossypii genome as a tool for mapping the ancient Saccharomyces cerevisiae genome.</title>
        <authorList>
            <person name="Dietrich F.S."/>
            <person name="Voegeli S."/>
            <person name="Brachat S."/>
            <person name="Lerch A."/>
            <person name="Gates K."/>
            <person name="Steiner S."/>
            <person name="Mohr C."/>
            <person name="Poehlmann R."/>
            <person name="Luedi P."/>
            <person name="Choi S."/>
            <person name="Wing R.A."/>
            <person name="Flavier A."/>
            <person name="Gaffney T.D."/>
            <person name="Philippsen P."/>
        </authorList>
    </citation>
    <scope>NUCLEOTIDE SEQUENCE [LARGE SCALE GENOMIC DNA]</scope>
    <source>
        <strain>ATCC 10895 / CBS 109.51 / FGSC 9923 / NRRL Y-1056</strain>
    </source>
</reference>
<reference key="2">
    <citation type="journal article" date="2013" name="G3 (Bethesda)">
        <title>Genomes of Ashbya fungi isolated from insects reveal four mating-type loci, numerous translocations, lack of transposons, and distinct gene duplications.</title>
        <authorList>
            <person name="Dietrich F.S."/>
            <person name="Voegeli S."/>
            <person name="Kuo S."/>
            <person name="Philippsen P."/>
        </authorList>
    </citation>
    <scope>GENOME REANNOTATION</scope>
    <source>
        <strain>ATCC 10895 / CBS 109.51 / FGSC 9923 / NRRL Y-1056</strain>
    </source>
</reference>
<keyword id="KW-1185">Reference proteome</keyword>
<keyword id="KW-0687">Ribonucleoprotein</keyword>
<keyword id="KW-0689">Ribosomal protein</keyword>
<evidence type="ECO:0000305" key="1"/>
<comment type="similarity">
    <text evidence="1">Belongs to the universal ribosomal protein uL1 family.</text>
</comment>
<protein>
    <recommendedName>
        <fullName evidence="1">Large ribosomal subunit protein uL1</fullName>
    </recommendedName>
    <alternativeName>
        <fullName>60S ribosomal protein L10a</fullName>
    </alternativeName>
</protein>
<accession>Q755D9</accession>
<proteinExistence type="inferred from homology"/>